<dbReference type="EC" id="2.7.7.8" evidence="1"/>
<dbReference type="EMBL" id="CP000262">
    <property type="protein sequence ID" value="ABF38704.1"/>
    <property type="molecule type" value="Genomic_DNA"/>
</dbReference>
<dbReference type="SMR" id="Q1J4N2"/>
<dbReference type="KEGG" id="spi:MGAS10750_Spy1754"/>
<dbReference type="HOGENOM" id="CLU_004217_2_2_9"/>
<dbReference type="Proteomes" id="UP000002434">
    <property type="component" value="Chromosome"/>
</dbReference>
<dbReference type="GO" id="GO:0005829">
    <property type="term" value="C:cytosol"/>
    <property type="evidence" value="ECO:0007669"/>
    <property type="project" value="TreeGrafter"/>
</dbReference>
<dbReference type="GO" id="GO:0000175">
    <property type="term" value="F:3'-5'-RNA exonuclease activity"/>
    <property type="evidence" value="ECO:0007669"/>
    <property type="project" value="TreeGrafter"/>
</dbReference>
<dbReference type="GO" id="GO:0000287">
    <property type="term" value="F:magnesium ion binding"/>
    <property type="evidence" value="ECO:0007669"/>
    <property type="project" value="UniProtKB-UniRule"/>
</dbReference>
<dbReference type="GO" id="GO:0004654">
    <property type="term" value="F:polyribonucleotide nucleotidyltransferase activity"/>
    <property type="evidence" value="ECO:0007669"/>
    <property type="project" value="UniProtKB-UniRule"/>
</dbReference>
<dbReference type="GO" id="GO:0003723">
    <property type="term" value="F:RNA binding"/>
    <property type="evidence" value="ECO:0007669"/>
    <property type="project" value="UniProtKB-UniRule"/>
</dbReference>
<dbReference type="GO" id="GO:0006402">
    <property type="term" value="P:mRNA catabolic process"/>
    <property type="evidence" value="ECO:0007669"/>
    <property type="project" value="UniProtKB-UniRule"/>
</dbReference>
<dbReference type="GO" id="GO:0006396">
    <property type="term" value="P:RNA processing"/>
    <property type="evidence" value="ECO:0007669"/>
    <property type="project" value="InterPro"/>
</dbReference>
<dbReference type="CDD" id="cd02393">
    <property type="entry name" value="KH-I_PNPase"/>
    <property type="match status" value="1"/>
</dbReference>
<dbReference type="CDD" id="cd11363">
    <property type="entry name" value="RNase_PH_PNPase_1"/>
    <property type="match status" value="1"/>
</dbReference>
<dbReference type="CDD" id="cd11364">
    <property type="entry name" value="RNase_PH_PNPase_2"/>
    <property type="match status" value="1"/>
</dbReference>
<dbReference type="FunFam" id="2.40.50.140:FF:000023">
    <property type="entry name" value="Polyribonucleotide nucleotidyltransferase"/>
    <property type="match status" value="1"/>
</dbReference>
<dbReference type="FunFam" id="3.30.1370.10:FF:000001">
    <property type="entry name" value="Polyribonucleotide nucleotidyltransferase"/>
    <property type="match status" value="1"/>
</dbReference>
<dbReference type="FunFam" id="3.30.230.70:FF:000001">
    <property type="entry name" value="Polyribonucleotide nucleotidyltransferase"/>
    <property type="match status" value="1"/>
</dbReference>
<dbReference type="FunFam" id="3.30.230.70:FF:000002">
    <property type="entry name" value="Polyribonucleotide nucleotidyltransferase"/>
    <property type="match status" value="1"/>
</dbReference>
<dbReference type="Gene3D" id="3.30.230.70">
    <property type="entry name" value="GHMP Kinase, N-terminal domain"/>
    <property type="match status" value="2"/>
</dbReference>
<dbReference type="Gene3D" id="3.30.1370.10">
    <property type="entry name" value="K Homology domain, type 1"/>
    <property type="match status" value="1"/>
</dbReference>
<dbReference type="Gene3D" id="2.40.50.140">
    <property type="entry name" value="Nucleic acid-binding proteins"/>
    <property type="match status" value="1"/>
</dbReference>
<dbReference type="HAMAP" id="MF_01595">
    <property type="entry name" value="PNPase"/>
    <property type="match status" value="1"/>
</dbReference>
<dbReference type="InterPro" id="IPR001247">
    <property type="entry name" value="ExoRNase_PH_dom1"/>
</dbReference>
<dbReference type="InterPro" id="IPR015847">
    <property type="entry name" value="ExoRNase_PH_dom2"/>
</dbReference>
<dbReference type="InterPro" id="IPR036345">
    <property type="entry name" value="ExoRNase_PH_dom2_sf"/>
</dbReference>
<dbReference type="InterPro" id="IPR004087">
    <property type="entry name" value="KH_dom"/>
</dbReference>
<dbReference type="InterPro" id="IPR004088">
    <property type="entry name" value="KH_dom_type_1"/>
</dbReference>
<dbReference type="InterPro" id="IPR036612">
    <property type="entry name" value="KH_dom_type_1_sf"/>
</dbReference>
<dbReference type="InterPro" id="IPR012340">
    <property type="entry name" value="NA-bd_OB-fold"/>
</dbReference>
<dbReference type="InterPro" id="IPR012162">
    <property type="entry name" value="PNPase"/>
</dbReference>
<dbReference type="InterPro" id="IPR027408">
    <property type="entry name" value="PNPase/RNase_PH_dom_sf"/>
</dbReference>
<dbReference type="InterPro" id="IPR015848">
    <property type="entry name" value="PNPase_PH_RNA-bd_bac/org-type"/>
</dbReference>
<dbReference type="InterPro" id="IPR036456">
    <property type="entry name" value="PNPase_PH_RNA-bd_sf"/>
</dbReference>
<dbReference type="InterPro" id="IPR020568">
    <property type="entry name" value="Ribosomal_Su5_D2-typ_SF"/>
</dbReference>
<dbReference type="InterPro" id="IPR003029">
    <property type="entry name" value="S1_domain"/>
</dbReference>
<dbReference type="NCBIfam" id="TIGR03591">
    <property type="entry name" value="polynuc_phos"/>
    <property type="match status" value="1"/>
</dbReference>
<dbReference type="NCBIfam" id="NF008805">
    <property type="entry name" value="PRK11824.1"/>
    <property type="match status" value="1"/>
</dbReference>
<dbReference type="PANTHER" id="PTHR11252">
    <property type="entry name" value="POLYRIBONUCLEOTIDE NUCLEOTIDYLTRANSFERASE"/>
    <property type="match status" value="1"/>
</dbReference>
<dbReference type="PANTHER" id="PTHR11252:SF0">
    <property type="entry name" value="POLYRIBONUCLEOTIDE NUCLEOTIDYLTRANSFERASE 1, MITOCHONDRIAL"/>
    <property type="match status" value="1"/>
</dbReference>
<dbReference type="Pfam" id="PF00013">
    <property type="entry name" value="KH_1"/>
    <property type="match status" value="1"/>
</dbReference>
<dbReference type="Pfam" id="PF03726">
    <property type="entry name" value="PNPase"/>
    <property type="match status" value="1"/>
</dbReference>
<dbReference type="Pfam" id="PF01138">
    <property type="entry name" value="RNase_PH"/>
    <property type="match status" value="2"/>
</dbReference>
<dbReference type="Pfam" id="PF03725">
    <property type="entry name" value="RNase_PH_C"/>
    <property type="match status" value="2"/>
</dbReference>
<dbReference type="Pfam" id="PF00575">
    <property type="entry name" value="S1"/>
    <property type="match status" value="1"/>
</dbReference>
<dbReference type="PIRSF" id="PIRSF005499">
    <property type="entry name" value="PNPase"/>
    <property type="match status" value="1"/>
</dbReference>
<dbReference type="SMART" id="SM00322">
    <property type="entry name" value="KH"/>
    <property type="match status" value="1"/>
</dbReference>
<dbReference type="SMART" id="SM00316">
    <property type="entry name" value="S1"/>
    <property type="match status" value="1"/>
</dbReference>
<dbReference type="SUPFAM" id="SSF54791">
    <property type="entry name" value="Eukaryotic type KH-domain (KH-domain type I)"/>
    <property type="match status" value="1"/>
</dbReference>
<dbReference type="SUPFAM" id="SSF50249">
    <property type="entry name" value="Nucleic acid-binding proteins"/>
    <property type="match status" value="1"/>
</dbReference>
<dbReference type="SUPFAM" id="SSF46915">
    <property type="entry name" value="Polynucleotide phosphorylase/guanosine pentaphosphate synthase (PNPase/GPSI), domain 3"/>
    <property type="match status" value="1"/>
</dbReference>
<dbReference type="SUPFAM" id="SSF55666">
    <property type="entry name" value="Ribonuclease PH domain 2-like"/>
    <property type="match status" value="2"/>
</dbReference>
<dbReference type="SUPFAM" id="SSF54211">
    <property type="entry name" value="Ribosomal protein S5 domain 2-like"/>
    <property type="match status" value="2"/>
</dbReference>
<dbReference type="PROSITE" id="PS50084">
    <property type="entry name" value="KH_TYPE_1"/>
    <property type="match status" value="1"/>
</dbReference>
<dbReference type="PROSITE" id="PS50126">
    <property type="entry name" value="S1"/>
    <property type="match status" value="1"/>
</dbReference>
<proteinExistence type="inferred from homology"/>
<gene>
    <name evidence="1" type="primary">pnp</name>
    <name type="ordered locus">MGAS10750_Spy1754</name>
</gene>
<reference key="1">
    <citation type="journal article" date="2006" name="Proc. Natl. Acad. Sci. U.S.A.">
        <title>Molecular genetic anatomy of inter- and intraserotype variation in the human bacterial pathogen group A Streptococcus.</title>
        <authorList>
            <person name="Beres S.B."/>
            <person name="Richter E.W."/>
            <person name="Nagiec M.J."/>
            <person name="Sumby P."/>
            <person name="Porcella S.F."/>
            <person name="DeLeo F.R."/>
            <person name="Musser J.M."/>
        </authorList>
    </citation>
    <scope>NUCLEOTIDE SEQUENCE [LARGE SCALE GENOMIC DNA]</scope>
    <source>
        <strain>MGAS10750</strain>
    </source>
</reference>
<name>PNP_STRPF</name>
<feature type="chain" id="PRO_0000329879" description="Polyribonucleotide nucleotidyltransferase">
    <location>
        <begin position="1"/>
        <end position="710"/>
    </location>
</feature>
<feature type="domain" description="KH" evidence="1">
    <location>
        <begin position="556"/>
        <end position="615"/>
    </location>
</feature>
<feature type="domain" description="S1 motif" evidence="1">
    <location>
        <begin position="625"/>
        <end position="693"/>
    </location>
</feature>
<feature type="region of interest" description="Disordered" evidence="2">
    <location>
        <begin position="691"/>
        <end position="710"/>
    </location>
</feature>
<feature type="compositionally biased region" description="Basic and acidic residues" evidence="2">
    <location>
        <begin position="700"/>
        <end position="710"/>
    </location>
</feature>
<feature type="binding site" evidence="1">
    <location>
        <position position="489"/>
    </location>
    <ligand>
        <name>Mg(2+)</name>
        <dbReference type="ChEBI" id="CHEBI:18420"/>
    </ligand>
</feature>
<feature type="binding site" evidence="1">
    <location>
        <position position="495"/>
    </location>
    <ligand>
        <name>Mg(2+)</name>
        <dbReference type="ChEBI" id="CHEBI:18420"/>
    </ligand>
</feature>
<accession>Q1J4N2</accession>
<keyword id="KW-0963">Cytoplasm</keyword>
<keyword id="KW-0460">Magnesium</keyword>
<keyword id="KW-0479">Metal-binding</keyword>
<keyword id="KW-0548">Nucleotidyltransferase</keyword>
<keyword id="KW-0694">RNA-binding</keyword>
<keyword id="KW-0808">Transferase</keyword>
<organism>
    <name type="scientific">Streptococcus pyogenes serotype M4 (strain MGAS10750)</name>
    <dbReference type="NCBI Taxonomy" id="370554"/>
    <lineage>
        <taxon>Bacteria</taxon>
        <taxon>Bacillati</taxon>
        <taxon>Bacillota</taxon>
        <taxon>Bacilli</taxon>
        <taxon>Lactobacillales</taxon>
        <taxon>Streptococcaceae</taxon>
        <taxon>Streptococcus</taxon>
    </lineage>
</organism>
<sequence length="710" mass="77320">MSKQTFTTTFAGKPLVVEVGQVAKQANGATVVRYGDSTVLTAAVMSKKMATGDFFPLQVNYEEKMYAAGKFPGGFMKREGRPSTDATLTARLIDRPIRPMFAEGFRNEVQVINTVLSYDENASAPVAAMFGSSLALSISDIPFNGPIAGVQVGYIDGEFIINPDKEQMEASLLELTVAGSKEAINMVESGAKELSEDIMLEALLKGHQAIQELIAFQEQIVAVVGKEKAEVELLQVDADLQADIVAKYNAQLQKAVQVEEKKAREAATEAVKEMVKAEYEERYAEDENLATIMRDVAEILEQMEHAEVRRLITEDKIRPDGRKIDEIRPLDAVVDFLPKVHGSGLFTRGQTQALSVLTLAPMGETQIIDGLAPEYKKRFLHHYNFPQYSVGETGRYGAAGRREIGHGALGERALEQVLPSLEEFPYAIRLVAEVLESNGSSSQASICAGTLALMAGGVPIKAPVAGIAMGLISDGTNYTVLTDIQGLEDHFGDMDFKVAGTREGITALQMDIKIAGITPQILEEALAQAKKARFEILDVIEATIAEPRPELAPTAPKIDTIKIDVDKIKVVIGKGGETIDKIIAETGVKIDIDDEGNVSIYSSDQAAIDRTKEIIAGLVREAKVGEVYHAKVIRIEKFGAFVNLFDKTDALVHISEIAWTRTANVSDVLEVGEDVDVKVIKIDEKGRVDASMKALIPRPPKPEKKEEKHD</sequence>
<protein>
    <recommendedName>
        <fullName evidence="1">Polyribonucleotide nucleotidyltransferase</fullName>
        <ecNumber evidence="1">2.7.7.8</ecNumber>
    </recommendedName>
    <alternativeName>
        <fullName evidence="1">Polynucleotide phosphorylase</fullName>
        <shortName evidence="1">PNPase</shortName>
    </alternativeName>
</protein>
<evidence type="ECO:0000255" key="1">
    <source>
        <dbReference type="HAMAP-Rule" id="MF_01595"/>
    </source>
</evidence>
<evidence type="ECO:0000256" key="2">
    <source>
        <dbReference type="SAM" id="MobiDB-lite"/>
    </source>
</evidence>
<comment type="function">
    <text evidence="1">Involved in mRNA degradation. Catalyzes the phosphorolysis of single-stranded polyribonucleotides processively in the 3'- to 5'-direction.</text>
</comment>
<comment type="catalytic activity">
    <reaction evidence="1">
        <text>RNA(n+1) + phosphate = RNA(n) + a ribonucleoside 5'-diphosphate</text>
        <dbReference type="Rhea" id="RHEA:22096"/>
        <dbReference type="Rhea" id="RHEA-COMP:14527"/>
        <dbReference type="Rhea" id="RHEA-COMP:17342"/>
        <dbReference type="ChEBI" id="CHEBI:43474"/>
        <dbReference type="ChEBI" id="CHEBI:57930"/>
        <dbReference type="ChEBI" id="CHEBI:140395"/>
        <dbReference type="EC" id="2.7.7.8"/>
    </reaction>
</comment>
<comment type="cofactor">
    <cofactor evidence="1">
        <name>Mg(2+)</name>
        <dbReference type="ChEBI" id="CHEBI:18420"/>
    </cofactor>
</comment>
<comment type="subcellular location">
    <subcellularLocation>
        <location evidence="1">Cytoplasm</location>
    </subcellularLocation>
</comment>
<comment type="similarity">
    <text evidence="1">Belongs to the polyribonucleotide nucleotidyltransferase family.</text>
</comment>